<protein>
    <recommendedName>
        <fullName evidence="1">Large ribosomal subunit protein bL32</fullName>
    </recommendedName>
    <alternativeName>
        <fullName evidence="3">50S ribosomal protein L32</fullName>
    </alternativeName>
</protein>
<organism>
    <name type="scientific">Allorhizobium ampelinum (strain ATCC BAA-846 / DSM 112012 / S4)</name>
    <name type="common">Agrobacterium vitis (strain S4)</name>
    <dbReference type="NCBI Taxonomy" id="311402"/>
    <lineage>
        <taxon>Bacteria</taxon>
        <taxon>Pseudomonadati</taxon>
        <taxon>Pseudomonadota</taxon>
        <taxon>Alphaproteobacteria</taxon>
        <taxon>Hyphomicrobiales</taxon>
        <taxon>Rhizobiaceae</taxon>
        <taxon>Rhizobium/Agrobacterium group</taxon>
        <taxon>Allorhizobium</taxon>
        <taxon>Allorhizobium ampelinum</taxon>
    </lineage>
</organism>
<reference key="1">
    <citation type="journal article" date="2009" name="J. Bacteriol.">
        <title>Genome sequences of three Agrobacterium biovars help elucidate the evolution of multichromosome genomes in bacteria.</title>
        <authorList>
            <person name="Slater S.C."/>
            <person name="Goldman B.S."/>
            <person name="Goodner B."/>
            <person name="Setubal J.C."/>
            <person name="Farrand S.K."/>
            <person name="Nester E.W."/>
            <person name="Burr T.J."/>
            <person name="Banta L."/>
            <person name="Dickerman A.W."/>
            <person name="Paulsen I."/>
            <person name="Otten L."/>
            <person name="Suen G."/>
            <person name="Welch R."/>
            <person name="Almeida N.F."/>
            <person name="Arnold F."/>
            <person name="Burton O.T."/>
            <person name="Du Z."/>
            <person name="Ewing A."/>
            <person name="Godsy E."/>
            <person name="Heisel S."/>
            <person name="Houmiel K.L."/>
            <person name="Jhaveri J."/>
            <person name="Lu J."/>
            <person name="Miller N.M."/>
            <person name="Norton S."/>
            <person name="Chen Q."/>
            <person name="Phoolcharoen W."/>
            <person name="Ohlin V."/>
            <person name="Ondrusek D."/>
            <person name="Pride N."/>
            <person name="Stricklin S.L."/>
            <person name="Sun J."/>
            <person name="Wheeler C."/>
            <person name="Wilson L."/>
            <person name="Zhu H."/>
            <person name="Wood D.W."/>
        </authorList>
    </citation>
    <scope>NUCLEOTIDE SEQUENCE [LARGE SCALE GENOMIC DNA]</scope>
    <source>
        <strain>ATCC BAA-846 / DSM 112012 / S4</strain>
    </source>
</reference>
<accession>B9JV13</accession>
<comment type="similarity">
    <text evidence="1">Belongs to the bacterial ribosomal protein bL32 family.</text>
</comment>
<gene>
    <name evidence="1" type="primary">rpmF</name>
    <name type="ordered locus">Avi_4342</name>
</gene>
<proteinExistence type="inferred from homology"/>
<name>RL32_ALLAM</name>
<feature type="chain" id="PRO_1000195952" description="Large ribosomal subunit protein bL32">
    <location>
        <begin position="1"/>
        <end position="61"/>
    </location>
</feature>
<feature type="region of interest" description="Disordered" evidence="2">
    <location>
        <begin position="1"/>
        <end position="33"/>
    </location>
</feature>
<feature type="compositionally biased region" description="Basic residues" evidence="2">
    <location>
        <begin position="1"/>
        <end position="16"/>
    </location>
</feature>
<evidence type="ECO:0000255" key="1">
    <source>
        <dbReference type="HAMAP-Rule" id="MF_00340"/>
    </source>
</evidence>
<evidence type="ECO:0000256" key="2">
    <source>
        <dbReference type="SAM" id="MobiDB-lite"/>
    </source>
</evidence>
<evidence type="ECO:0000305" key="3"/>
<keyword id="KW-1185">Reference proteome</keyword>
<keyword id="KW-0687">Ribonucleoprotein</keyword>
<keyword id="KW-0689">Ribosomal protein</keyword>
<dbReference type="EMBL" id="CP000633">
    <property type="protein sequence ID" value="ACM38151.1"/>
    <property type="molecule type" value="Genomic_DNA"/>
</dbReference>
<dbReference type="RefSeq" id="WP_007604390.1">
    <property type="nucleotide sequence ID" value="NC_011989.1"/>
</dbReference>
<dbReference type="SMR" id="B9JV13"/>
<dbReference type="STRING" id="311402.Avi_4342"/>
<dbReference type="GeneID" id="60683566"/>
<dbReference type="KEGG" id="avi:Avi_4342"/>
<dbReference type="eggNOG" id="COG0333">
    <property type="taxonomic scope" value="Bacteria"/>
</dbReference>
<dbReference type="HOGENOM" id="CLU_129084_2_2_5"/>
<dbReference type="Proteomes" id="UP000001596">
    <property type="component" value="Chromosome 1"/>
</dbReference>
<dbReference type="GO" id="GO:0015934">
    <property type="term" value="C:large ribosomal subunit"/>
    <property type="evidence" value="ECO:0007669"/>
    <property type="project" value="InterPro"/>
</dbReference>
<dbReference type="GO" id="GO:0003735">
    <property type="term" value="F:structural constituent of ribosome"/>
    <property type="evidence" value="ECO:0007669"/>
    <property type="project" value="InterPro"/>
</dbReference>
<dbReference type="GO" id="GO:0006412">
    <property type="term" value="P:translation"/>
    <property type="evidence" value="ECO:0007669"/>
    <property type="project" value="UniProtKB-UniRule"/>
</dbReference>
<dbReference type="Gene3D" id="1.20.5.640">
    <property type="entry name" value="Single helix bin"/>
    <property type="match status" value="1"/>
</dbReference>
<dbReference type="HAMAP" id="MF_00340">
    <property type="entry name" value="Ribosomal_bL32"/>
    <property type="match status" value="1"/>
</dbReference>
<dbReference type="InterPro" id="IPR002677">
    <property type="entry name" value="Ribosomal_bL32"/>
</dbReference>
<dbReference type="InterPro" id="IPR044957">
    <property type="entry name" value="Ribosomal_bL32_bact"/>
</dbReference>
<dbReference type="InterPro" id="IPR011332">
    <property type="entry name" value="Ribosomal_zn-bd"/>
</dbReference>
<dbReference type="NCBIfam" id="TIGR01031">
    <property type="entry name" value="rpmF_bact"/>
    <property type="match status" value="1"/>
</dbReference>
<dbReference type="PANTHER" id="PTHR35534">
    <property type="entry name" value="50S RIBOSOMAL PROTEIN L32"/>
    <property type="match status" value="1"/>
</dbReference>
<dbReference type="PANTHER" id="PTHR35534:SF1">
    <property type="entry name" value="LARGE RIBOSOMAL SUBUNIT PROTEIN BL32"/>
    <property type="match status" value="1"/>
</dbReference>
<dbReference type="Pfam" id="PF01783">
    <property type="entry name" value="Ribosomal_L32p"/>
    <property type="match status" value="1"/>
</dbReference>
<dbReference type="SUPFAM" id="SSF57829">
    <property type="entry name" value="Zn-binding ribosomal proteins"/>
    <property type="match status" value="1"/>
</dbReference>
<sequence>MAVPKRKTSPSKRGMRRSADGLKAPTYVEDKNSGELRRPHHIDLKTGMYRGRQVLTPKESA</sequence>